<dbReference type="EC" id="2.3.1.158" evidence="4"/>
<dbReference type="EMBL" id="CU329671">
    <property type="protein sequence ID" value="CAA22887.2"/>
    <property type="molecule type" value="Genomic_DNA"/>
</dbReference>
<dbReference type="PIR" id="T40685">
    <property type="entry name" value="T40685"/>
</dbReference>
<dbReference type="RefSeq" id="NP_596330.2">
    <property type="nucleotide sequence ID" value="NM_001022251.2"/>
</dbReference>
<dbReference type="SMR" id="O94680"/>
<dbReference type="BioGRID" id="277701">
    <property type="interactions" value="29"/>
</dbReference>
<dbReference type="FunCoup" id="O94680">
    <property type="interactions" value="219"/>
</dbReference>
<dbReference type="STRING" id="284812.O94680"/>
<dbReference type="ESTHER" id="schpo-pdat">
    <property type="family name" value="PC-sterol_acyltransferase"/>
</dbReference>
<dbReference type="iPTMnet" id="O94680"/>
<dbReference type="PaxDb" id="4896-SPBC776.14.1"/>
<dbReference type="EnsemblFungi" id="SPBC776.14.1">
    <property type="protein sequence ID" value="SPBC776.14.1:pep"/>
    <property type="gene ID" value="SPBC776.14"/>
</dbReference>
<dbReference type="GeneID" id="2541187"/>
<dbReference type="KEGG" id="spo:2541187"/>
<dbReference type="PomBase" id="SPBC776.14">
    <property type="gene designation" value="plh1"/>
</dbReference>
<dbReference type="VEuPathDB" id="FungiDB:SPBC776.14"/>
<dbReference type="eggNOG" id="KOG2369">
    <property type="taxonomic scope" value="Eukaryota"/>
</dbReference>
<dbReference type="HOGENOM" id="CLU_016065_1_0_1"/>
<dbReference type="InParanoid" id="O94680"/>
<dbReference type="OMA" id="FYFLKWV"/>
<dbReference type="UniPathway" id="UPA00282"/>
<dbReference type="PRO" id="PR:O94680"/>
<dbReference type="Proteomes" id="UP000002485">
    <property type="component" value="Chromosome II"/>
</dbReference>
<dbReference type="GO" id="GO:0032541">
    <property type="term" value="C:cortical endoplasmic reticulum"/>
    <property type="evidence" value="ECO:0000314"/>
    <property type="project" value="PomBase"/>
</dbReference>
<dbReference type="GO" id="GO:0005737">
    <property type="term" value="C:cytoplasm"/>
    <property type="evidence" value="ECO:0000318"/>
    <property type="project" value="GO_Central"/>
</dbReference>
<dbReference type="GO" id="GO:0005783">
    <property type="term" value="C:endoplasmic reticulum"/>
    <property type="evidence" value="ECO:0007005"/>
    <property type="project" value="PomBase"/>
</dbReference>
<dbReference type="GO" id="GO:0005789">
    <property type="term" value="C:endoplasmic reticulum membrane"/>
    <property type="evidence" value="ECO:0000305"/>
    <property type="project" value="PomBase"/>
</dbReference>
<dbReference type="GO" id="GO:0097038">
    <property type="term" value="C:perinuclear endoplasmic reticulum"/>
    <property type="evidence" value="ECO:0000314"/>
    <property type="project" value="PomBase"/>
</dbReference>
<dbReference type="GO" id="GO:0008374">
    <property type="term" value="F:O-acyltransferase activity"/>
    <property type="evidence" value="ECO:0007669"/>
    <property type="project" value="InterPro"/>
</dbReference>
<dbReference type="GO" id="GO:0046027">
    <property type="term" value="F:phospholipid:diacylglycerol acyltransferase activity"/>
    <property type="evidence" value="ECO:0000315"/>
    <property type="project" value="PomBase"/>
</dbReference>
<dbReference type="GO" id="GO:0046339">
    <property type="term" value="P:diacylglycerol metabolic process"/>
    <property type="evidence" value="ECO:0000305"/>
    <property type="project" value="PomBase"/>
</dbReference>
<dbReference type="GO" id="GO:0140042">
    <property type="term" value="P:lipid droplet formation"/>
    <property type="evidence" value="ECO:0000315"/>
    <property type="project" value="PomBase"/>
</dbReference>
<dbReference type="GO" id="GO:0019915">
    <property type="term" value="P:lipid storage"/>
    <property type="evidence" value="ECO:0000269"/>
    <property type="project" value="PomBase"/>
</dbReference>
<dbReference type="GO" id="GO:0019432">
    <property type="term" value="P:triglyceride biosynthetic process"/>
    <property type="evidence" value="ECO:0000315"/>
    <property type="project" value="PomBase"/>
</dbReference>
<dbReference type="FunFam" id="3.40.50.1820:FF:000160">
    <property type="entry name" value="Phospholipid:diacylglycerol acyltransferase 1"/>
    <property type="match status" value="1"/>
</dbReference>
<dbReference type="Gene3D" id="3.40.50.1820">
    <property type="entry name" value="alpha/beta hydrolase"/>
    <property type="match status" value="1"/>
</dbReference>
<dbReference type="InterPro" id="IPR029058">
    <property type="entry name" value="AB_hydrolase_fold"/>
</dbReference>
<dbReference type="InterPro" id="IPR003386">
    <property type="entry name" value="LACT/PDAT_acylTrfase"/>
</dbReference>
<dbReference type="PANTHER" id="PTHR11440">
    <property type="entry name" value="LECITHIN-CHOLESTEROL ACYLTRANSFERASE-RELATED"/>
    <property type="match status" value="1"/>
</dbReference>
<dbReference type="Pfam" id="PF02450">
    <property type="entry name" value="LCAT"/>
    <property type="match status" value="1"/>
</dbReference>
<dbReference type="SUPFAM" id="SSF53474">
    <property type="entry name" value="alpha/beta-Hydrolases"/>
    <property type="match status" value="1"/>
</dbReference>
<proteinExistence type="evidence at protein level"/>
<comment type="function">
    <text evidence="4 6 7">Catalyzes triacylglycerol (TAG) formation by an acyl-CoA independent pathway. The enzyme specifically transfers acyl groups from the sn-2 position of a phospholipid to diacylglycerol (DAG), thus forming an sn-1-lysophospholipid. Plays a major role in triacylglycerol formation at log phase (PubMed:12963726, PubMed:26990381). Involved in lipid particle synthesis from the endoplasmic reticulum, promoting localized TAG production at discrete ER subdomains (PubMed:26990381, PubMed:28011631).</text>
</comment>
<comment type="catalytic activity">
    <reaction evidence="4">
        <text>a glycerophospholipid + a 1,2-diacyl-sn-glycerol = a monoacylglycerophospholipid + a triacyl-sn-glycerol</text>
        <dbReference type="Rhea" id="RHEA:14057"/>
        <dbReference type="ChEBI" id="CHEBI:17815"/>
        <dbReference type="ChEBI" id="CHEBI:64615"/>
        <dbReference type="ChEBI" id="CHEBI:136912"/>
        <dbReference type="ChEBI" id="CHEBI:136913"/>
        <dbReference type="EC" id="2.3.1.158"/>
    </reaction>
</comment>
<comment type="pathway">
    <text evidence="9">Glycerolipid metabolism; triacylglycerol biosynthesis.</text>
</comment>
<comment type="subcellular location">
    <subcellularLocation>
        <location evidence="4 5">Endoplasmic reticulum membrane</location>
        <topology evidence="2">Single-pass type II membrane protein</topology>
    </subcellularLocation>
</comment>
<comment type="disruption phenotype">
    <text evidence="6 7">Has reduced whole-cell and lipid droplet (LD) TAG levels. Cells lacking both TAG synthase genes (plh1 and dga1) have no LDs and exhibit defects in spore germination and in spore wall integrity.</text>
</comment>
<comment type="similarity">
    <text evidence="8">Belongs to the AB hydrolase superfamily. Lipase family.</text>
</comment>
<gene>
    <name type="primary">plh1</name>
    <name type="ORF">SPBC776.14</name>
</gene>
<accession>O94680</accession>
<reference key="1">
    <citation type="journal article" date="2002" name="Nature">
        <title>The genome sequence of Schizosaccharomyces pombe.</title>
        <authorList>
            <person name="Wood V."/>
            <person name="Gwilliam R."/>
            <person name="Rajandream M.A."/>
            <person name="Lyne M.H."/>
            <person name="Lyne R."/>
            <person name="Stewart A."/>
            <person name="Sgouros J.G."/>
            <person name="Peat N."/>
            <person name="Hayles J."/>
            <person name="Baker S.G."/>
            <person name="Basham D."/>
            <person name="Bowman S."/>
            <person name="Brooks K."/>
            <person name="Brown D."/>
            <person name="Brown S."/>
            <person name="Chillingworth T."/>
            <person name="Churcher C.M."/>
            <person name="Collins M."/>
            <person name="Connor R."/>
            <person name="Cronin A."/>
            <person name="Davis P."/>
            <person name="Feltwell T."/>
            <person name="Fraser A."/>
            <person name="Gentles S."/>
            <person name="Goble A."/>
            <person name="Hamlin N."/>
            <person name="Harris D.E."/>
            <person name="Hidalgo J."/>
            <person name="Hodgson G."/>
            <person name="Holroyd S."/>
            <person name="Hornsby T."/>
            <person name="Howarth S."/>
            <person name="Huckle E.J."/>
            <person name="Hunt S."/>
            <person name="Jagels K."/>
            <person name="James K.D."/>
            <person name="Jones L."/>
            <person name="Jones M."/>
            <person name="Leather S."/>
            <person name="McDonald S."/>
            <person name="McLean J."/>
            <person name="Mooney P."/>
            <person name="Moule S."/>
            <person name="Mungall K.L."/>
            <person name="Murphy L.D."/>
            <person name="Niblett D."/>
            <person name="Odell C."/>
            <person name="Oliver K."/>
            <person name="O'Neil S."/>
            <person name="Pearson D."/>
            <person name="Quail M.A."/>
            <person name="Rabbinowitsch E."/>
            <person name="Rutherford K.M."/>
            <person name="Rutter S."/>
            <person name="Saunders D."/>
            <person name="Seeger K."/>
            <person name="Sharp S."/>
            <person name="Skelton J."/>
            <person name="Simmonds M.N."/>
            <person name="Squares R."/>
            <person name="Squares S."/>
            <person name="Stevens K."/>
            <person name="Taylor K."/>
            <person name="Taylor R.G."/>
            <person name="Tivey A."/>
            <person name="Walsh S.V."/>
            <person name="Warren T."/>
            <person name="Whitehead S."/>
            <person name="Woodward J.R."/>
            <person name="Volckaert G."/>
            <person name="Aert R."/>
            <person name="Robben J."/>
            <person name="Grymonprez B."/>
            <person name="Weltjens I."/>
            <person name="Vanstreels E."/>
            <person name="Rieger M."/>
            <person name="Schaefer M."/>
            <person name="Mueller-Auer S."/>
            <person name="Gabel C."/>
            <person name="Fuchs M."/>
            <person name="Duesterhoeft A."/>
            <person name="Fritzc C."/>
            <person name="Holzer E."/>
            <person name="Moestl D."/>
            <person name="Hilbert H."/>
            <person name="Borzym K."/>
            <person name="Langer I."/>
            <person name="Beck A."/>
            <person name="Lehrach H."/>
            <person name="Reinhardt R."/>
            <person name="Pohl T.M."/>
            <person name="Eger P."/>
            <person name="Zimmermann W."/>
            <person name="Wedler H."/>
            <person name="Wambutt R."/>
            <person name="Purnelle B."/>
            <person name="Goffeau A."/>
            <person name="Cadieu E."/>
            <person name="Dreano S."/>
            <person name="Gloux S."/>
            <person name="Lelaure V."/>
            <person name="Mottier S."/>
            <person name="Galibert F."/>
            <person name="Aves S.J."/>
            <person name="Xiang Z."/>
            <person name="Hunt C."/>
            <person name="Moore K."/>
            <person name="Hurst S.M."/>
            <person name="Lucas M."/>
            <person name="Rochet M."/>
            <person name="Gaillardin C."/>
            <person name="Tallada V.A."/>
            <person name="Garzon A."/>
            <person name="Thode G."/>
            <person name="Daga R.R."/>
            <person name="Cruzado L."/>
            <person name="Jimenez J."/>
            <person name="Sanchez M."/>
            <person name="del Rey F."/>
            <person name="Benito J."/>
            <person name="Dominguez A."/>
            <person name="Revuelta J.L."/>
            <person name="Moreno S."/>
            <person name="Armstrong J."/>
            <person name="Forsburg S.L."/>
            <person name="Cerutti L."/>
            <person name="Lowe T."/>
            <person name="McCombie W.R."/>
            <person name="Paulsen I."/>
            <person name="Potashkin J."/>
            <person name="Shpakovski G.V."/>
            <person name="Ussery D."/>
            <person name="Barrell B.G."/>
            <person name="Nurse P."/>
        </authorList>
    </citation>
    <scope>NUCLEOTIDE SEQUENCE [LARGE SCALE GENOMIC DNA]</scope>
    <source>
        <strain>972 / ATCC 24843</strain>
    </source>
</reference>
<reference key="2">
    <citation type="journal article" date="2011" name="Science">
        <title>Comparative functional genomics of the fission yeasts.</title>
        <authorList>
            <person name="Rhind N."/>
            <person name="Chen Z."/>
            <person name="Yassour M."/>
            <person name="Thompson D.A."/>
            <person name="Haas B.J."/>
            <person name="Habib N."/>
            <person name="Wapinski I."/>
            <person name="Roy S."/>
            <person name="Lin M.F."/>
            <person name="Heiman D.I."/>
            <person name="Young S.K."/>
            <person name="Furuya K."/>
            <person name="Guo Y."/>
            <person name="Pidoux A."/>
            <person name="Chen H.M."/>
            <person name="Robbertse B."/>
            <person name="Goldberg J.M."/>
            <person name="Aoki K."/>
            <person name="Bayne E.H."/>
            <person name="Berlin A.M."/>
            <person name="Desjardins C.A."/>
            <person name="Dobbs E."/>
            <person name="Dukaj L."/>
            <person name="Fan L."/>
            <person name="FitzGerald M.G."/>
            <person name="French C."/>
            <person name="Gujja S."/>
            <person name="Hansen K."/>
            <person name="Keifenheim D."/>
            <person name="Levin J.Z."/>
            <person name="Mosher R.A."/>
            <person name="Mueller C.A."/>
            <person name="Pfiffner J."/>
            <person name="Priest M."/>
            <person name="Russ C."/>
            <person name="Smialowska A."/>
            <person name="Swoboda P."/>
            <person name="Sykes S.M."/>
            <person name="Vaughn M."/>
            <person name="Vengrova S."/>
            <person name="Yoder R."/>
            <person name="Zeng Q."/>
            <person name="Allshire R."/>
            <person name="Baulcombe D."/>
            <person name="Birren B.W."/>
            <person name="Brown W."/>
            <person name="Ekwall K."/>
            <person name="Kellis M."/>
            <person name="Leatherwood J."/>
            <person name="Levin H."/>
            <person name="Margalit H."/>
            <person name="Martienssen R."/>
            <person name="Nieduszynski C.A."/>
            <person name="Spatafora J.W."/>
            <person name="Friedman N."/>
            <person name="Dalgaard J.Z."/>
            <person name="Baumann P."/>
            <person name="Niki H."/>
            <person name="Regev A."/>
            <person name="Nusbaum C."/>
        </authorList>
    </citation>
    <scope>REVISION OF GENE MODEL</scope>
</reference>
<reference key="3">
    <citation type="journal article" date="2003" name="J. Biol. Chem.">
        <title>Schizosaccharomyces pombe cells deficient in triacylglycerols synthesis undergo apoptosis upon entry into the stationary phase.</title>
        <authorList>
            <person name="Zhang Q."/>
            <person name="Chieu H.K."/>
            <person name="Low C.P."/>
            <person name="Zhang S."/>
            <person name="Heng C.K."/>
            <person name="Yang H."/>
        </authorList>
    </citation>
    <scope>FUNCTION</scope>
    <scope>CATALYTIC ACTIVITY</scope>
    <scope>SUBCELLULAR LOCATION</scope>
</reference>
<reference key="4">
    <citation type="journal article" date="2006" name="Nat. Biotechnol.">
        <title>ORFeome cloning and global analysis of protein localization in the fission yeast Schizosaccharomyces pombe.</title>
        <authorList>
            <person name="Matsuyama A."/>
            <person name="Arai R."/>
            <person name="Yashiroda Y."/>
            <person name="Shirai A."/>
            <person name="Kamata A."/>
            <person name="Sekido S."/>
            <person name="Kobayashi Y."/>
            <person name="Hashimoto A."/>
            <person name="Hamamoto M."/>
            <person name="Hiraoka Y."/>
            <person name="Horinouchi S."/>
            <person name="Yoshida M."/>
        </authorList>
    </citation>
    <scope>SUBCELLULAR LOCATION [LARGE SCALE ANALYSIS]</scope>
</reference>
<reference key="5">
    <citation type="journal article" date="2016" name="Traffic">
        <title>Lipid droplets form from distinct regions of the cell in the fission yeast Schizosaccharomyces pombe.</title>
        <authorList>
            <person name="Meyers A."/>
            <person name="Del Rio Z.P."/>
            <person name="Beaver R.A."/>
            <person name="Morris R.M."/>
            <person name="Weiskittel T.M."/>
            <person name="Alshibli A.K."/>
            <person name="Mannik J."/>
            <person name="Morrell-Falvey J."/>
            <person name="Dalhaimer P."/>
        </authorList>
    </citation>
    <scope>FUNCTION</scope>
    <scope>DISRUPTION PHENOTYPE</scope>
</reference>
<reference key="6">
    <citation type="journal article" date="2017" name="Biol. Open">
        <title>Lipid droplet dynamics during Schizosaccharomyces pombe sporulation and their role in spore survival.</title>
        <authorList>
            <person name="Yang H.J."/>
            <person name="Osakada H."/>
            <person name="Kojidani T."/>
            <person name="Haraguchi T."/>
            <person name="Hiraoka Y."/>
        </authorList>
    </citation>
    <scope>FUNCTION</scope>
    <scope>DISRUPTION PHENOTYPE</scope>
</reference>
<organism>
    <name type="scientific">Schizosaccharomyces pombe (strain 972 / ATCC 24843)</name>
    <name type="common">Fission yeast</name>
    <dbReference type="NCBI Taxonomy" id="284812"/>
    <lineage>
        <taxon>Eukaryota</taxon>
        <taxon>Fungi</taxon>
        <taxon>Dikarya</taxon>
        <taxon>Ascomycota</taxon>
        <taxon>Taphrinomycotina</taxon>
        <taxon>Schizosaccharomycetes</taxon>
        <taxon>Schizosaccharomycetales</taxon>
        <taxon>Schizosaccharomycetaceae</taxon>
        <taxon>Schizosaccharomyces</taxon>
    </lineage>
</organism>
<keyword id="KW-0012">Acyltransferase</keyword>
<keyword id="KW-0256">Endoplasmic reticulum</keyword>
<keyword id="KW-0472">Membrane</keyword>
<keyword id="KW-1185">Reference proteome</keyword>
<keyword id="KW-0735">Signal-anchor</keyword>
<keyword id="KW-0808">Transferase</keyword>
<keyword id="KW-0812">Transmembrane</keyword>
<keyword id="KW-1133">Transmembrane helix</keyword>
<protein>
    <recommendedName>
        <fullName>Phospholipid:diacylglycerol acyltransferase</fullName>
        <shortName>PDAT</shortName>
        <ecNumber evidence="4">2.3.1.158</ecNumber>
    </recommendedName>
    <alternativeName>
        <fullName>Pombe LRO1 homolog 1</fullName>
    </alternativeName>
    <alternativeName>
        <fullName>Triacylglycerol synthase</fullName>
        <shortName>TAG synthase</shortName>
    </alternativeName>
</protein>
<feature type="chain" id="PRO_0000058267" description="Phospholipid:diacylglycerol acyltransferase">
    <location>
        <begin position="1"/>
        <end position="632"/>
    </location>
</feature>
<feature type="topological domain" description="Cytoplasmic" evidence="2">
    <location>
        <begin position="1"/>
        <end position="56"/>
    </location>
</feature>
<feature type="transmembrane region" description="Helical" evidence="2">
    <location>
        <begin position="57"/>
        <end position="77"/>
    </location>
</feature>
<feature type="topological domain" description="Lumenal" evidence="2">
    <location>
        <begin position="78"/>
        <end position="632"/>
    </location>
</feature>
<feature type="region of interest" description="Disordered" evidence="3">
    <location>
        <begin position="1"/>
        <end position="47"/>
    </location>
</feature>
<feature type="compositionally biased region" description="Basic residues" evidence="3">
    <location>
        <begin position="1"/>
        <end position="15"/>
    </location>
</feature>
<feature type="compositionally biased region" description="Polar residues" evidence="3">
    <location>
        <begin position="32"/>
        <end position="46"/>
    </location>
</feature>
<feature type="active site" description="Acyl-ester intermediate" evidence="1">
    <location>
        <position position="293"/>
    </location>
</feature>
<feature type="active site" description="Charge relay system" evidence="1">
    <location>
        <position position="535"/>
    </location>
</feature>
<feature type="active site" description="Charge relay system" evidence="1">
    <location>
        <position position="586"/>
    </location>
</feature>
<feature type="binding site" evidence="1">
    <location>
        <position position="136"/>
    </location>
    <ligand>
        <name>substrate</name>
    </ligand>
</feature>
<feature type="binding site" evidence="1">
    <location>
        <position position="294"/>
    </location>
    <ligand>
        <name>substrate</name>
    </ligand>
</feature>
<sequence length="632" mass="70833">MASSKKSKTHKKKKEVKSPIDLPNSKKPTRALSEQPSASETQSVSNKSRKSKFGKRLNFILGAILGICGAFFFAVGDDNAVFDPATLDKFGNMLGSSDLFDDIKGYLSYNVFKDAPFTTDKPSQSPSGNEVQVGLDMYNEGYRSDHPVIMVPGVISSGLESWSFNNCSIPYFRKRLWGSWSMLKAMFLDKQCWLEHLMLDKKTGLDPKGIKLRAAQGFEAADFFITGYWIWSKVIENLAAIGYEPNNMLSASYDWRLSYANLEERDKYFSKLKMFIEYSNIVHKKKVVLISHSMGSQVTYYFFKWVEAEGYGNGGPTWVNDHIEAFINISGSLIGAPKTVAALLSGEMKDTAQLNQFSVYGLEKFFSRSERAMMVRTMGGVSSMLPKGGDVVWGNASWAPDDLNQTNFSNGAIIRYREDIDKDHDEFDIDDALQFLKNVTDDDFKVMLAKNYSHGLAWTEKEVLKNNEMPSKWINPLETSLPYAPDMKIYCVHGVGKPTERGYYYTNNPEGQPVIDSSVNDGTKVENGIVMDDGDGTLPILALGLVCNKVWQTKRFNPANTSITNYEIKHEPAAFDLRGGPRSAEHVDILGHSELNEIILKVSSGHGDSVPNRYISDIQEIINEINLDKPRN</sequence>
<name>PDAT_SCHPO</name>
<evidence type="ECO:0000250" key="1">
    <source>
        <dbReference type="UniProtKB" id="Q8NCC3"/>
    </source>
</evidence>
<evidence type="ECO:0000255" key="2"/>
<evidence type="ECO:0000256" key="3">
    <source>
        <dbReference type="SAM" id="MobiDB-lite"/>
    </source>
</evidence>
<evidence type="ECO:0000269" key="4">
    <source>
    </source>
</evidence>
<evidence type="ECO:0000269" key="5">
    <source>
    </source>
</evidence>
<evidence type="ECO:0000269" key="6">
    <source>
    </source>
</evidence>
<evidence type="ECO:0000269" key="7">
    <source>
    </source>
</evidence>
<evidence type="ECO:0000305" key="8"/>
<evidence type="ECO:0000305" key="9">
    <source>
    </source>
</evidence>